<evidence type="ECO:0000255" key="1">
    <source>
        <dbReference type="HAMAP-Rule" id="MF_01210"/>
    </source>
</evidence>
<protein>
    <recommendedName>
        <fullName evidence="1">Carbamoyl phosphate synthase large chain</fullName>
        <ecNumber evidence="1">6.3.4.16</ecNumber>
        <ecNumber evidence="1">6.3.5.5</ecNumber>
    </recommendedName>
    <alternativeName>
        <fullName evidence="1">Carbamoyl phosphate synthetase ammonia chain</fullName>
    </alternativeName>
</protein>
<sequence length="1057" mass="117172">MPKRNDIKTILVIGSGPIIIGQAAEFDYAGTQACLALKEEGYRVILVNSNPATIMTDKEIADKVYIEPLTHDFIARIIRKEQPDALLPTLGGQTGLNMAIQLHESGVLQDNNVQLLGTELTSIQQAEDREMFRTLMNDLNVPVPESDIVNTVEQAFKFKEQVGYPLIVRPAFTMGGTGGGICHNDEELHEIVSNGLHYSPATQCLLEKSIAGFKEIEYEVMRDKNDNAIVVCNMENIDPVGIHTGDSIVVAPSQTLSDVEYQMLRDVSLKVIRALGIEGGCNVQLALDPHSFDYYIIEVNPRVSRSSALASKATGYPIAKLAAKIAVGLTLDEMLNPITGTSYAAFEPTLDYVISKIPRFPFDKFEKGERELGTQMKATGEVMAIGRTYEESLLKAIRSLEYGVHHLGLPNGESFDLDYIKERISHQDDERLFFIGEAIRRGTTLEEIHNMTQIDYFFLHKFQNIIDIEHQLKEHQGDLEYLKYAKDYGFSDKTIAHRFNMTEEEVYQLRMENDIKPVYKMVDTCAAEFESSTPYYYGTYETENESIVTDKEKILVLGSGPIRIGQGVEFDYATVHAVWAIQKAGYEAIIVNNNPETVSTDFSISDKLYFEPLTEEDVMNIINLEKPKGVVVQFGGQTAINLADKLAKHGVKILGTSLENLNRAEDRKEFEALLRKINVPQPQGKSATSPEEALANAAEIGYPVVVRPSYVLGGRAMEIVDNDKELENYMTQAVKASPEHPVLVDRYLTGKEIEVDAICDGETVIIPGIMEHIERAGVHSGDSIAVYPPQTLTEDELATLEDYTIKLAKGLNIIGLINIQFVIAHDGVYVLEVNPRSSRTVPFLSKITDIPMAQLAMRAIIGEKLTDMGYQEGVQPYAEGVFVKAPVFSFNKLKNVDITLGPEMKSTGEVMGKDTTLEKALFKGLTGSGVEVKDHGTVLMTVSDKDKEEVVKLAQRLNEVGYKILATSGTANKLAEYDIPAEVVGKIGGENDLLTRIQNGDVQIVINTMTKGKEVERDGFQIRRTTVENGIPCLTSLDTANALTNVIESMTFTMRQM</sequence>
<comment type="function">
    <text evidence="1">Large subunit of the glutamine-dependent carbamoyl phosphate synthetase (CPSase). CPSase catalyzes the formation of carbamoyl phosphate from the ammonia moiety of glutamine, carbonate, and phosphate donated by ATP, constituting the first step of 2 biosynthetic pathways, one leading to arginine and/or urea and the other to pyrimidine nucleotides. The large subunit (synthetase) binds the substrates ammonia (free or transferred from glutamine from the small subunit), hydrogencarbonate and ATP and carries out an ATP-coupled ligase reaction, activating hydrogencarbonate by forming carboxy phosphate which reacts with ammonia to form carbamoyl phosphate.</text>
</comment>
<comment type="catalytic activity">
    <reaction evidence="1">
        <text>hydrogencarbonate + L-glutamine + 2 ATP + H2O = carbamoyl phosphate + L-glutamate + 2 ADP + phosphate + 2 H(+)</text>
        <dbReference type="Rhea" id="RHEA:18633"/>
        <dbReference type="ChEBI" id="CHEBI:15377"/>
        <dbReference type="ChEBI" id="CHEBI:15378"/>
        <dbReference type="ChEBI" id="CHEBI:17544"/>
        <dbReference type="ChEBI" id="CHEBI:29985"/>
        <dbReference type="ChEBI" id="CHEBI:30616"/>
        <dbReference type="ChEBI" id="CHEBI:43474"/>
        <dbReference type="ChEBI" id="CHEBI:58228"/>
        <dbReference type="ChEBI" id="CHEBI:58359"/>
        <dbReference type="ChEBI" id="CHEBI:456216"/>
        <dbReference type="EC" id="6.3.5.5"/>
    </reaction>
</comment>
<comment type="catalytic activity">
    <molecule>Carbamoyl phosphate synthase large chain</molecule>
    <reaction evidence="1">
        <text>hydrogencarbonate + NH4(+) + 2 ATP = carbamoyl phosphate + 2 ADP + phosphate + 2 H(+)</text>
        <dbReference type="Rhea" id="RHEA:18029"/>
        <dbReference type="ChEBI" id="CHEBI:15378"/>
        <dbReference type="ChEBI" id="CHEBI:17544"/>
        <dbReference type="ChEBI" id="CHEBI:28938"/>
        <dbReference type="ChEBI" id="CHEBI:30616"/>
        <dbReference type="ChEBI" id="CHEBI:43474"/>
        <dbReference type="ChEBI" id="CHEBI:58228"/>
        <dbReference type="ChEBI" id="CHEBI:456216"/>
        <dbReference type="EC" id="6.3.4.16"/>
    </reaction>
</comment>
<comment type="cofactor">
    <cofactor evidence="1">
        <name>Mg(2+)</name>
        <dbReference type="ChEBI" id="CHEBI:18420"/>
    </cofactor>
    <cofactor evidence="1">
        <name>Mn(2+)</name>
        <dbReference type="ChEBI" id="CHEBI:29035"/>
    </cofactor>
    <text evidence="1">Binds 4 Mg(2+) or Mn(2+) ions per subunit.</text>
</comment>
<comment type="pathway">
    <text evidence="1">Amino-acid biosynthesis; L-arginine biosynthesis; carbamoyl phosphate from bicarbonate: step 1/1.</text>
</comment>
<comment type="pathway">
    <text evidence="1">Pyrimidine metabolism; UMP biosynthesis via de novo pathway; (S)-dihydroorotate from bicarbonate: step 1/3.</text>
</comment>
<comment type="subunit">
    <text evidence="1">Composed of two chains; the small (or glutamine) chain promotes the hydrolysis of glutamine to ammonia, which is used by the large (or ammonia) chain to synthesize carbamoyl phosphate. Tetramer of heterodimers (alpha,beta)4.</text>
</comment>
<comment type="domain">
    <text evidence="1">The large subunit is composed of 2 ATP-grasp domains that are involved in binding the 2 ATP molecules needed for carbamoyl phosphate synthesis. The N-terminal ATP-grasp domain (referred to as the carboxyphosphate synthetic component) catalyzes the ATP-dependent phosphorylation of hydrogencarbonate to carboxyphosphate and the subsequent nucleophilic attack by ammonia to form a carbamate intermediate. The C-terminal ATP-grasp domain (referred to as the carbamoyl phosphate synthetic component) then catalyzes the phosphorylation of carbamate with the second ATP to form the end product carbamoyl phosphate. The reactive and unstable enzyme intermediates are sequentially channeled from one active site to the next through the interior of the protein over a distance of at least 96 A.</text>
</comment>
<comment type="similarity">
    <text evidence="1">Belongs to the CarB family.</text>
</comment>
<proteinExistence type="inferred from homology"/>
<gene>
    <name evidence="1" type="primary">carB</name>
    <name type="ordered locus">SAHV_1193</name>
</gene>
<accession>A7X1F4</accession>
<dbReference type="EC" id="6.3.4.16" evidence="1"/>
<dbReference type="EC" id="6.3.5.5" evidence="1"/>
<dbReference type="EMBL" id="AP009324">
    <property type="protein sequence ID" value="BAF78076.1"/>
    <property type="molecule type" value="Genomic_DNA"/>
</dbReference>
<dbReference type="RefSeq" id="WP_001126259.1">
    <property type="nucleotide sequence ID" value="NC_009782.1"/>
</dbReference>
<dbReference type="SMR" id="A7X1F4"/>
<dbReference type="KEGG" id="saw:SAHV_1193"/>
<dbReference type="HOGENOM" id="CLU_000513_1_2_9"/>
<dbReference type="UniPathway" id="UPA00068">
    <property type="reaction ID" value="UER00171"/>
</dbReference>
<dbReference type="UniPathway" id="UPA00070">
    <property type="reaction ID" value="UER00115"/>
</dbReference>
<dbReference type="GO" id="GO:0005737">
    <property type="term" value="C:cytoplasm"/>
    <property type="evidence" value="ECO:0007669"/>
    <property type="project" value="TreeGrafter"/>
</dbReference>
<dbReference type="GO" id="GO:0005524">
    <property type="term" value="F:ATP binding"/>
    <property type="evidence" value="ECO:0007669"/>
    <property type="project" value="UniProtKB-UniRule"/>
</dbReference>
<dbReference type="GO" id="GO:0004087">
    <property type="term" value="F:carbamoyl-phosphate synthase (ammonia) activity"/>
    <property type="evidence" value="ECO:0007669"/>
    <property type="project" value="RHEA"/>
</dbReference>
<dbReference type="GO" id="GO:0004088">
    <property type="term" value="F:carbamoyl-phosphate synthase (glutamine-hydrolyzing) activity"/>
    <property type="evidence" value="ECO:0007669"/>
    <property type="project" value="UniProtKB-UniRule"/>
</dbReference>
<dbReference type="GO" id="GO:0046872">
    <property type="term" value="F:metal ion binding"/>
    <property type="evidence" value="ECO:0007669"/>
    <property type="project" value="UniProtKB-KW"/>
</dbReference>
<dbReference type="GO" id="GO:0044205">
    <property type="term" value="P:'de novo' UMP biosynthetic process"/>
    <property type="evidence" value="ECO:0007669"/>
    <property type="project" value="UniProtKB-UniRule"/>
</dbReference>
<dbReference type="GO" id="GO:0006541">
    <property type="term" value="P:glutamine metabolic process"/>
    <property type="evidence" value="ECO:0007669"/>
    <property type="project" value="TreeGrafter"/>
</dbReference>
<dbReference type="GO" id="GO:0006526">
    <property type="term" value="P:L-arginine biosynthetic process"/>
    <property type="evidence" value="ECO:0007669"/>
    <property type="project" value="UniProtKB-UniRule"/>
</dbReference>
<dbReference type="CDD" id="cd01424">
    <property type="entry name" value="MGS_CPS_II"/>
    <property type="match status" value="1"/>
</dbReference>
<dbReference type="FunFam" id="1.10.1030.10:FF:000002">
    <property type="entry name" value="Carbamoyl-phosphate synthase large chain"/>
    <property type="match status" value="1"/>
</dbReference>
<dbReference type="FunFam" id="3.30.1490.20:FF:000001">
    <property type="entry name" value="Carbamoyl-phosphate synthase large chain"/>
    <property type="match status" value="1"/>
</dbReference>
<dbReference type="FunFam" id="3.30.470.20:FF:000001">
    <property type="entry name" value="Carbamoyl-phosphate synthase large chain"/>
    <property type="match status" value="1"/>
</dbReference>
<dbReference type="FunFam" id="3.30.470.20:FF:000026">
    <property type="entry name" value="Carbamoyl-phosphate synthase large chain"/>
    <property type="match status" value="1"/>
</dbReference>
<dbReference type="FunFam" id="3.40.50.1380:FF:000011">
    <property type="entry name" value="Carbamoyl-phosphate synthase large chain"/>
    <property type="match status" value="1"/>
</dbReference>
<dbReference type="FunFam" id="3.40.50.20:FF:000001">
    <property type="entry name" value="Carbamoyl-phosphate synthase large chain"/>
    <property type="match status" value="2"/>
</dbReference>
<dbReference type="Gene3D" id="3.40.50.20">
    <property type="match status" value="2"/>
</dbReference>
<dbReference type="Gene3D" id="3.30.1490.20">
    <property type="entry name" value="ATP-grasp fold, A domain"/>
    <property type="match status" value="1"/>
</dbReference>
<dbReference type="Gene3D" id="3.30.470.20">
    <property type="entry name" value="ATP-grasp fold, B domain"/>
    <property type="match status" value="2"/>
</dbReference>
<dbReference type="Gene3D" id="1.10.1030.10">
    <property type="entry name" value="Carbamoyl-phosphate synthetase, large subunit oligomerisation domain"/>
    <property type="match status" value="1"/>
</dbReference>
<dbReference type="Gene3D" id="3.40.50.1380">
    <property type="entry name" value="Methylglyoxal synthase-like domain"/>
    <property type="match status" value="1"/>
</dbReference>
<dbReference type="HAMAP" id="MF_01210_A">
    <property type="entry name" value="CPSase_L_chain_A"/>
    <property type="match status" value="1"/>
</dbReference>
<dbReference type="HAMAP" id="MF_01210_B">
    <property type="entry name" value="CPSase_L_chain_B"/>
    <property type="match status" value="1"/>
</dbReference>
<dbReference type="InterPro" id="IPR011761">
    <property type="entry name" value="ATP-grasp"/>
</dbReference>
<dbReference type="InterPro" id="IPR013815">
    <property type="entry name" value="ATP_grasp_subdomain_1"/>
</dbReference>
<dbReference type="InterPro" id="IPR006275">
    <property type="entry name" value="CarbamoylP_synth_lsu"/>
</dbReference>
<dbReference type="InterPro" id="IPR005480">
    <property type="entry name" value="CarbamoylP_synth_lsu_oligo"/>
</dbReference>
<dbReference type="InterPro" id="IPR036897">
    <property type="entry name" value="CarbamoylP_synth_lsu_oligo_sf"/>
</dbReference>
<dbReference type="InterPro" id="IPR005479">
    <property type="entry name" value="CbamoylP_synth_lsu-like_ATP-bd"/>
</dbReference>
<dbReference type="InterPro" id="IPR005483">
    <property type="entry name" value="CbamoylP_synth_lsu_CPSase_dom"/>
</dbReference>
<dbReference type="InterPro" id="IPR011607">
    <property type="entry name" value="MGS-like_dom"/>
</dbReference>
<dbReference type="InterPro" id="IPR036914">
    <property type="entry name" value="MGS-like_dom_sf"/>
</dbReference>
<dbReference type="InterPro" id="IPR033937">
    <property type="entry name" value="MGS_CPS_CarB"/>
</dbReference>
<dbReference type="InterPro" id="IPR016185">
    <property type="entry name" value="PreATP-grasp_dom_sf"/>
</dbReference>
<dbReference type="NCBIfam" id="TIGR01369">
    <property type="entry name" value="CPSaseII_lrg"/>
    <property type="match status" value="1"/>
</dbReference>
<dbReference type="NCBIfam" id="NF003671">
    <property type="entry name" value="PRK05294.1"/>
    <property type="match status" value="1"/>
</dbReference>
<dbReference type="NCBIfam" id="NF009455">
    <property type="entry name" value="PRK12815.1"/>
    <property type="match status" value="1"/>
</dbReference>
<dbReference type="PANTHER" id="PTHR11405:SF53">
    <property type="entry name" value="CARBAMOYL-PHOSPHATE SYNTHASE [AMMONIA], MITOCHONDRIAL"/>
    <property type="match status" value="1"/>
</dbReference>
<dbReference type="PANTHER" id="PTHR11405">
    <property type="entry name" value="CARBAMOYLTRANSFERASE FAMILY MEMBER"/>
    <property type="match status" value="1"/>
</dbReference>
<dbReference type="Pfam" id="PF02786">
    <property type="entry name" value="CPSase_L_D2"/>
    <property type="match status" value="2"/>
</dbReference>
<dbReference type="Pfam" id="PF02787">
    <property type="entry name" value="CPSase_L_D3"/>
    <property type="match status" value="1"/>
</dbReference>
<dbReference type="Pfam" id="PF02142">
    <property type="entry name" value="MGS"/>
    <property type="match status" value="1"/>
</dbReference>
<dbReference type="PRINTS" id="PR00098">
    <property type="entry name" value="CPSASE"/>
</dbReference>
<dbReference type="SMART" id="SM01096">
    <property type="entry name" value="CPSase_L_D3"/>
    <property type="match status" value="1"/>
</dbReference>
<dbReference type="SMART" id="SM01209">
    <property type="entry name" value="GARS_A"/>
    <property type="match status" value="1"/>
</dbReference>
<dbReference type="SMART" id="SM00851">
    <property type="entry name" value="MGS"/>
    <property type="match status" value="1"/>
</dbReference>
<dbReference type="SUPFAM" id="SSF48108">
    <property type="entry name" value="Carbamoyl phosphate synthetase, large subunit connection domain"/>
    <property type="match status" value="1"/>
</dbReference>
<dbReference type="SUPFAM" id="SSF56059">
    <property type="entry name" value="Glutathione synthetase ATP-binding domain-like"/>
    <property type="match status" value="2"/>
</dbReference>
<dbReference type="SUPFAM" id="SSF52335">
    <property type="entry name" value="Methylglyoxal synthase-like"/>
    <property type="match status" value="1"/>
</dbReference>
<dbReference type="SUPFAM" id="SSF52440">
    <property type="entry name" value="PreATP-grasp domain"/>
    <property type="match status" value="2"/>
</dbReference>
<dbReference type="PROSITE" id="PS50975">
    <property type="entry name" value="ATP_GRASP"/>
    <property type="match status" value="2"/>
</dbReference>
<dbReference type="PROSITE" id="PS00866">
    <property type="entry name" value="CPSASE_1"/>
    <property type="match status" value="2"/>
</dbReference>
<dbReference type="PROSITE" id="PS00867">
    <property type="entry name" value="CPSASE_2"/>
    <property type="match status" value="2"/>
</dbReference>
<dbReference type="PROSITE" id="PS51855">
    <property type="entry name" value="MGS"/>
    <property type="match status" value="1"/>
</dbReference>
<name>CARB_STAA1</name>
<reference key="1">
    <citation type="journal article" date="2008" name="Antimicrob. Agents Chemother.">
        <title>Mutated response regulator graR is responsible for phenotypic conversion of Staphylococcus aureus from heterogeneous vancomycin-intermediate resistance to vancomycin-intermediate resistance.</title>
        <authorList>
            <person name="Neoh H.-M."/>
            <person name="Cui L."/>
            <person name="Yuzawa H."/>
            <person name="Takeuchi F."/>
            <person name="Matsuo M."/>
            <person name="Hiramatsu K."/>
        </authorList>
    </citation>
    <scope>NUCLEOTIDE SEQUENCE [LARGE SCALE GENOMIC DNA]</scope>
    <source>
        <strain>Mu3 / ATCC 700698</strain>
    </source>
</reference>
<organism>
    <name type="scientific">Staphylococcus aureus (strain Mu3 / ATCC 700698)</name>
    <dbReference type="NCBI Taxonomy" id="418127"/>
    <lineage>
        <taxon>Bacteria</taxon>
        <taxon>Bacillati</taxon>
        <taxon>Bacillota</taxon>
        <taxon>Bacilli</taxon>
        <taxon>Bacillales</taxon>
        <taxon>Staphylococcaceae</taxon>
        <taxon>Staphylococcus</taxon>
    </lineage>
</organism>
<keyword id="KW-0028">Amino-acid biosynthesis</keyword>
<keyword id="KW-0055">Arginine biosynthesis</keyword>
<keyword id="KW-0067">ATP-binding</keyword>
<keyword id="KW-0436">Ligase</keyword>
<keyword id="KW-0460">Magnesium</keyword>
<keyword id="KW-0464">Manganese</keyword>
<keyword id="KW-0479">Metal-binding</keyword>
<keyword id="KW-0547">Nucleotide-binding</keyword>
<keyword id="KW-0665">Pyrimidine biosynthesis</keyword>
<keyword id="KW-0677">Repeat</keyword>
<feature type="chain" id="PRO_1000066378" description="Carbamoyl phosphate synthase large chain">
    <location>
        <begin position="1"/>
        <end position="1057"/>
    </location>
</feature>
<feature type="domain" description="ATP-grasp 1" evidence="1">
    <location>
        <begin position="133"/>
        <end position="327"/>
    </location>
</feature>
<feature type="domain" description="ATP-grasp 2" evidence="1">
    <location>
        <begin position="671"/>
        <end position="861"/>
    </location>
</feature>
<feature type="domain" description="MGS-like" evidence="1">
    <location>
        <begin position="930"/>
        <end position="1057"/>
    </location>
</feature>
<feature type="region of interest" description="Carboxyphosphate synthetic domain" evidence="1">
    <location>
        <begin position="1"/>
        <end position="401"/>
    </location>
</feature>
<feature type="region of interest" description="Oligomerization domain" evidence="1">
    <location>
        <begin position="402"/>
        <end position="546"/>
    </location>
</feature>
<feature type="region of interest" description="Carbamoyl phosphate synthetic domain" evidence="1">
    <location>
        <begin position="547"/>
        <end position="929"/>
    </location>
</feature>
<feature type="region of interest" description="Allosteric domain" evidence="1">
    <location>
        <begin position="930"/>
        <end position="1057"/>
    </location>
</feature>
<feature type="binding site" evidence="1">
    <location>
        <position position="129"/>
    </location>
    <ligand>
        <name>ATP</name>
        <dbReference type="ChEBI" id="CHEBI:30616"/>
        <label>1</label>
    </ligand>
</feature>
<feature type="binding site" evidence="1">
    <location>
        <position position="169"/>
    </location>
    <ligand>
        <name>ATP</name>
        <dbReference type="ChEBI" id="CHEBI:30616"/>
        <label>1</label>
    </ligand>
</feature>
<feature type="binding site" evidence="1">
    <location>
        <position position="175"/>
    </location>
    <ligand>
        <name>ATP</name>
        <dbReference type="ChEBI" id="CHEBI:30616"/>
        <label>1</label>
    </ligand>
</feature>
<feature type="binding site" evidence="1">
    <location>
        <position position="176"/>
    </location>
    <ligand>
        <name>ATP</name>
        <dbReference type="ChEBI" id="CHEBI:30616"/>
        <label>1</label>
    </ligand>
</feature>
<feature type="binding site" evidence="1">
    <location>
        <position position="208"/>
    </location>
    <ligand>
        <name>ATP</name>
        <dbReference type="ChEBI" id="CHEBI:30616"/>
        <label>1</label>
    </ligand>
</feature>
<feature type="binding site" evidence="1">
    <location>
        <position position="210"/>
    </location>
    <ligand>
        <name>ATP</name>
        <dbReference type="ChEBI" id="CHEBI:30616"/>
        <label>1</label>
    </ligand>
</feature>
<feature type="binding site" evidence="1">
    <location>
        <position position="215"/>
    </location>
    <ligand>
        <name>ATP</name>
        <dbReference type="ChEBI" id="CHEBI:30616"/>
        <label>1</label>
    </ligand>
</feature>
<feature type="binding site" evidence="1">
    <location>
        <position position="241"/>
    </location>
    <ligand>
        <name>ATP</name>
        <dbReference type="ChEBI" id="CHEBI:30616"/>
        <label>1</label>
    </ligand>
</feature>
<feature type="binding site" evidence="1">
    <location>
        <position position="242"/>
    </location>
    <ligand>
        <name>ATP</name>
        <dbReference type="ChEBI" id="CHEBI:30616"/>
        <label>1</label>
    </ligand>
</feature>
<feature type="binding site" evidence="1">
    <location>
        <position position="243"/>
    </location>
    <ligand>
        <name>ATP</name>
        <dbReference type="ChEBI" id="CHEBI:30616"/>
        <label>1</label>
    </ligand>
</feature>
<feature type="binding site" evidence="1">
    <location>
        <position position="284"/>
    </location>
    <ligand>
        <name>ATP</name>
        <dbReference type="ChEBI" id="CHEBI:30616"/>
        <label>1</label>
    </ligand>
</feature>
<feature type="binding site" evidence="1">
    <location>
        <position position="284"/>
    </location>
    <ligand>
        <name>Mg(2+)</name>
        <dbReference type="ChEBI" id="CHEBI:18420"/>
        <label>1</label>
    </ligand>
</feature>
<feature type="binding site" evidence="1">
    <location>
        <position position="284"/>
    </location>
    <ligand>
        <name>Mn(2+)</name>
        <dbReference type="ChEBI" id="CHEBI:29035"/>
        <label>1</label>
    </ligand>
</feature>
<feature type="binding site" evidence="1">
    <location>
        <position position="298"/>
    </location>
    <ligand>
        <name>ATP</name>
        <dbReference type="ChEBI" id="CHEBI:30616"/>
        <label>1</label>
    </ligand>
</feature>
<feature type="binding site" evidence="1">
    <location>
        <position position="298"/>
    </location>
    <ligand>
        <name>Mg(2+)</name>
        <dbReference type="ChEBI" id="CHEBI:18420"/>
        <label>1</label>
    </ligand>
</feature>
<feature type="binding site" evidence="1">
    <location>
        <position position="298"/>
    </location>
    <ligand>
        <name>Mg(2+)</name>
        <dbReference type="ChEBI" id="CHEBI:18420"/>
        <label>2</label>
    </ligand>
</feature>
<feature type="binding site" evidence="1">
    <location>
        <position position="298"/>
    </location>
    <ligand>
        <name>Mn(2+)</name>
        <dbReference type="ChEBI" id="CHEBI:29035"/>
        <label>1</label>
    </ligand>
</feature>
<feature type="binding site" evidence="1">
    <location>
        <position position="298"/>
    </location>
    <ligand>
        <name>Mn(2+)</name>
        <dbReference type="ChEBI" id="CHEBI:29035"/>
        <label>2</label>
    </ligand>
</feature>
<feature type="binding site" evidence="1">
    <location>
        <position position="300"/>
    </location>
    <ligand>
        <name>Mg(2+)</name>
        <dbReference type="ChEBI" id="CHEBI:18420"/>
        <label>2</label>
    </ligand>
</feature>
<feature type="binding site" evidence="1">
    <location>
        <position position="300"/>
    </location>
    <ligand>
        <name>Mn(2+)</name>
        <dbReference type="ChEBI" id="CHEBI:29035"/>
        <label>2</label>
    </ligand>
</feature>
<feature type="binding site" evidence="1">
    <location>
        <position position="707"/>
    </location>
    <ligand>
        <name>ATP</name>
        <dbReference type="ChEBI" id="CHEBI:30616"/>
        <label>2</label>
    </ligand>
</feature>
<feature type="binding site" evidence="1">
    <location>
        <position position="746"/>
    </location>
    <ligand>
        <name>ATP</name>
        <dbReference type="ChEBI" id="CHEBI:30616"/>
        <label>2</label>
    </ligand>
</feature>
<feature type="binding site" evidence="1">
    <location>
        <position position="748"/>
    </location>
    <ligand>
        <name>ATP</name>
        <dbReference type="ChEBI" id="CHEBI:30616"/>
        <label>2</label>
    </ligand>
</feature>
<feature type="binding site" evidence="1">
    <location>
        <position position="752"/>
    </location>
    <ligand>
        <name>ATP</name>
        <dbReference type="ChEBI" id="CHEBI:30616"/>
        <label>2</label>
    </ligand>
</feature>
<feature type="binding site" evidence="1">
    <location>
        <position position="777"/>
    </location>
    <ligand>
        <name>ATP</name>
        <dbReference type="ChEBI" id="CHEBI:30616"/>
        <label>2</label>
    </ligand>
</feature>
<feature type="binding site" evidence="1">
    <location>
        <position position="778"/>
    </location>
    <ligand>
        <name>ATP</name>
        <dbReference type="ChEBI" id="CHEBI:30616"/>
        <label>2</label>
    </ligand>
</feature>
<feature type="binding site" evidence="1">
    <location>
        <position position="779"/>
    </location>
    <ligand>
        <name>ATP</name>
        <dbReference type="ChEBI" id="CHEBI:30616"/>
        <label>2</label>
    </ligand>
</feature>
<feature type="binding site" evidence="1">
    <location>
        <position position="780"/>
    </location>
    <ligand>
        <name>ATP</name>
        <dbReference type="ChEBI" id="CHEBI:30616"/>
        <label>2</label>
    </ligand>
</feature>
<feature type="binding site" evidence="1">
    <location>
        <position position="820"/>
    </location>
    <ligand>
        <name>ATP</name>
        <dbReference type="ChEBI" id="CHEBI:30616"/>
        <label>2</label>
    </ligand>
</feature>
<feature type="binding site" evidence="1">
    <location>
        <position position="820"/>
    </location>
    <ligand>
        <name>Mg(2+)</name>
        <dbReference type="ChEBI" id="CHEBI:18420"/>
        <label>3</label>
    </ligand>
</feature>
<feature type="binding site" evidence="1">
    <location>
        <position position="820"/>
    </location>
    <ligand>
        <name>Mn(2+)</name>
        <dbReference type="ChEBI" id="CHEBI:29035"/>
        <label>3</label>
    </ligand>
</feature>
<feature type="binding site" evidence="1">
    <location>
        <position position="832"/>
    </location>
    <ligand>
        <name>ATP</name>
        <dbReference type="ChEBI" id="CHEBI:30616"/>
        <label>2</label>
    </ligand>
</feature>
<feature type="binding site" evidence="1">
    <location>
        <position position="832"/>
    </location>
    <ligand>
        <name>Mg(2+)</name>
        <dbReference type="ChEBI" id="CHEBI:18420"/>
        <label>3</label>
    </ligand>
</feature>
<feature type="binding site" evidence="1">
    <location>
        <position position="832"/>
    </location>
    <ligand>
        <name>Mg(2+)</name>
        <dbReference type="ChEBI" id="CHEBI:18420"/>
        <label>4</label>
    </ligand>
</feature>
<feature type="binding site" evidence="1">
    <location>
        <position position="832"/>
    </location>
    <ligand>
        <name>Mn(2+)</name>
        <dbReference type="ChEBI" id="CHEBI:29035"/>
        <label>3</label>
    </ligand>
</feature>
<feature type="binding site" evidence="1">
    <location>
        <position position="832"/>
    </location>
    <ligand>
        <name>Mn(2+)</name>
        <dbReference type="ChEBI" id="CHEBI:29035"/>
        <label>4</label>
    </ligand>
</feature>
<feature type="binding site" evidence="1">
    <location>
        <position position="834"/>
    </location>
    <ligand>
        <name>Mg(2+)</name>
        <dbReference type="ChEBI" id="CHEBI:18420"/>
        <label>4</label>
    </ligand>
</feature>
<feature type="binding site" evidence="1">
    <location>
        <position position="834"/>
    </location>
    <ligand>
        <name>Mn(2+)</name>
        <dbReference type="ChEBI" id="CHEBI:29035"/>
        <label>4</label>
    </ligand>
</feature>